<feature type="initiator methionine" description="Removed" evidence="2">
    <location>
        <position position="1"/>
    </location>
</feature>
<feature type="chain" id="PRO_0000289078" description="Keratin, type I cytoskeletal 18" evidence="2">
    <location>
        <begin position="2"/>
        <end position="429"/>
    </location>
</feature>
<feature type="domain" description="IF rod" evidence="4">
    <location>
        <begin position="79"/>
        <end position="389"/>
    </location>
</feature>
<feature type="region of interest" description="Head" evidence="3">
    <location>
        <begin position="2"/>
        <end position="78"/>
    </location>
</feature>
<feature type="region of interest" description="Coil 1A" evidence="3">
    <location>
        <begin position="79"/>
        <end position="114"/>
    </location>
</feature>
<feature type="region of interest" description="Linker 1" evidence="3">
    <location>
        <begin position="115"/>
        <end position="130"/>
    </location>
</feature>
<feature type="region of interest" description="Coil 1B" evidence="3">
    <location>
        <begin position="131"/>
        <end position="222"/>
    </location>
</feature>
<feature type="region of interest" description="Linker 12" evidence="3">
    <location>
        <begin position="223"/>
        <end position="246"/>
    </location>
</feature>
<feature type="region of interest" description="Coil 2" evidence="3">
    <location>
        <begin position="247"/>
        <end position="385"/>
    </location>
</feature>
<feature type="region of interest" description="Tail" evidence="3">
    <location>
        <begin position="386"/>
        <end position="429"/>
    </location>
</feature>
<feature type="site" description="Cleavage; by caspases" evidence="1">
    <location>
        <begin position="236"/>
        <end position="237"/>
    </location>
</feature>
<feature type="site" description="Stutter" evidence="3">
    <location>
        <position position="329"/>
    </location>
</feature>
<feature type="sequence conflict" description="In Ref. 1; CAJ82137." evidence="5" ref="1">
    <original>S</original>
    <variation>A</variation>
    <location>
        <position position="24"/>
    </location>
</feature>
<accession>Q6P864</accession>
<accession>Q28H80</accession>
<organism>
    <name type="scientific">Xenopus tropicalis</name>
    <name type="common">Western clawed frog</name>
    <name type="synonym">Silurana tropicalis</name>
    <dbReference type="NCBI Taxonomy" id="8364"/>
    <lineage>
        <taxon>Eukaryota</taxon>
        <taxon>Metazoa</taxon>
        <taxon>Chordata</taxon>
        <taxon>Craniata</taxon>
        <taxon>Vertebrata</taxon>
        <taxon>Euteleostomi</taxon>
        <taxon>Amphibia</taxon>
        <taxon>Batrachia</taxon>
        <taxon>Anura</taxon>
        <taxon>Pipoidea</taxon>
        <taxon>Pipidae</taxon>
        <taxon>Xenopodinae</taxon>
        <taxon>Xenopus</taxon>
        <taxon>Silurana</taxon>
    </lineage>
</organism>
<protein>
    <recommendedName>
        <fullName>Keratin, type I cytoskeletal 18</fullName>
    </recommendedName>
    <alternativeName>
        <fullName>Cytokeratin-18</fullName>
        <shortName>CK-18</shortName>
    </alternativeName>
    <alternativeName>
        <fullName>Keratin-18</fullName>
        <shortName>K18</shortName>
    </alternativeName>
</protein>
<gene>
    <name evidence="7" type="primary">krt18</name>
    <name type="ORF">TEgg011c19.1</name>
</gene>
<dbReference type="EMBL" id="CR761001">
    <property type="protein sequence ID" value="CAJ82137.1"/>
    <property type="molecule type" value="mRNA"/>
</dbReference>
<dbReference type="EMBL" id="BC061366">
    <property type="protein sequence ID" value="AAH61366.1"/>
    <property type="molecule type" value="mRNA"/>
</dbReference>
<dbReference type="RefSeq" id="NP_988944.1">
    <property type="nucleotide sequence ID" value="NM_203613.1"/>
</dbReference>
<dbReference type="SMR" id="Q6P864"/>
<dbReference type="FunCoup" id="Q6P864">
    <property type="interactions" value="133"/>
</dbReference>
<dbReference type="STRING" id="8364.ENSXETP00000019968"/>
<dbReference type="PaxDb" id="8364-ENSXETP00000044186"/>
<dbReference type="DNASU" id="394541"/>
<dbReference type="GeneID" id="394541"/>
<dbReference type="KEGG" id="xtr:394541"/>
<dbReference type="AGR" id="Xenbase:XB-GENE-5820467"/>
<dbReference type="CTD" id="3875"/>
<dbReference type="Xenbase" id="XB-GENE-5820467">
    <property type="gene designation" value="krt18"/>
</dbReference>
<dbReference type="eggNOG" id="ENOG502QUS8">
    <property type="taxonomic scope" value="Eukaryota"/>
</dbReference>
<dbReference type="InParanoid" id="Q6P864"/>
<dbReference type="OMA" id="IHSTKIV"/>
<dbReference type="OrthoDB" id="2441647at2759"/>
<dbReference type="Reactome" id="R-XTR-6805567">
    <property type="pathway name" value="Keratinization"/>
</dbReference>
<dbReference type="Reactome" id="R-XTR-6809371">
    <property type="pathway name" value="Formation of the cornified envelope"/>
</dbReference>
<dbReference type="Proteomes" id="UP000008143">
    <property type="component" value="Chromosome 2"/>
</dbReference>
<dbReference type="GO" id="GO:0005882">
    <property type="term" value="C:intermediate filament"/>
    <property type="evidence" value="ECO:0007669"/>
    <property type="project" value="UniProtKB-KW"/>
</dbReference>
<dbReference type="GO" id="GO:0005198">
    <property type="term" value="F:structural molecule activity"/>
    <property type="evidence" value="ECO:0007669"/>
    <property type="project" value="InterPro"/>
</dbReference>
<dbReference type="FunFam" id="1.20.5.1160:FF:000002">
    <property type="entry name" value="Type I keratin 10"/>
    <property type="match status" value="1"/>
</dbReference>
<dbReference type="FunFam" id="1.20.5.170:FF:000002">
    <property type="entry name" value="Type I keratin KA11"/>
    <property type="match status" value="1"/>
</dbReference>
<dbReference type="FunFam" id="1.20.5.500:FF:000001">
    <property type="entry name" value="Type II keratin 23"/>
    <property type="match status" value="1"/>
</dbReference>
<dbReference type="Gene3D" id="1.20.5.170">
    <property type="match status" value="1"/>
</dbReference>
<dbReference type="Gene3D" id="1.20.5.500">
    <property type="entry name" value="Single helix bin"/>
    <property type="match status" value="1"/>
</dbReference>
<dbReference type="Gene3D" id="1.20.5.1160">
    <property type="entry name" value="Vasodilator-stimulated phosphoprotein"/>
    <property type="match status" value="1"/>
</dbReference>
<dbReference type="InterPro" id="IPR018039">
    <property type="entry name" value="IF_conserved"/>
</dbReference>
<dbReference type="InterPro" id="IPR039008">
    <property type="entry name" value="IF_rod_dom"/>
</dbReference>
<dbReference type="InterPro" id="IPR002957">
    <property type="entry name" value="Keratin_I"/>
</dbReference>
<dbReference type="PANTHER" id="PTHR23239">
    <property type="entry name" value="INTERMEDIATE FILAMENT"/>
    <property type="match status" value="1"/>
</dbReference>
<dbReference type="PANTHER" id="PTHR23239:SF349">
    <property type="entry name" value="KERATIN, TYPE I CYTOSKELETAL 18"/>
    <property type="match status" value="1"/>
</dbReference>
<dbReference type="Pfam" id="PF00038">
    <property type="entry name" value="Filament"/>
    <property type="match status" value="1"/>
</dbReference>
<dbReference type="PRINTS" id="PR01248">
    <property type="entry name" value="TYPE1KERATIN"/>
</dbReference>
<dbReference type="SMART" id="SM01391">
    <property type="entry name" value="Filament"/>
    <property type="match status" value="1"/>
</dbReference>
<dbReference type="SUPFAM" id="SSF64593">
    <property type="entry name" value="Intermediate filament protein, coiled coil region"/>
    <property type="match status" value="2"/>
</dbReference>
<dbReference type="PROSITE" id="PS00226">
    <property type="entry name" value="IF_ROD_1"/>
    <property type="match status" value="1"/>
</dbReference>
<dbReference type="PROSITE" id="PS51842">
    <property type="entry name" value="IF_ROD_2"/>
    <property type="match status" value="1"/>
</dbReference>
<sequence length="429" mass="47613">MSYSRSVYSSSSVVGGSPYRSLSSAPRFIPSSSAASVHAGAGGSGARISVSRVSSVGSGFGGGYSGVSNVNLIGGGQNEKETMQDLNDRLASYLERVRSLEAANKKLEVQIRQHTEKKGPSKDWSPYYKTIEDLRKQVFDSTLENSQLVLQIDNARLAADDFRVKYEAEMAIRMSVEGDITGLRKLIDDTNVSRMNLENEIESLKEELIFLKKNHQDDVTELQAQVARSAVTVEVDAPKSQDLGKIMTELRAQYDGLAQKNRDDVEKWYQSKVDEHTVQVNLDTEALHSAKSSVTDLRRTVQSLEIELESLRNQKASLEGTLHDTEARYAMELEMLGGTAMAMEAELVQVRSDCQRQQQEYQALLNTKMKLEAEIHTYRRLLEGDGSFDLQDAVPTVTTQTVKKVITTTQRIVDGKVVSESNDTEVLKS</sequence>
<name>K1C18_XENTR</name>
<evidence type="ECO:0000250" key="1"/>
<evidence type="ECO:0000250" key="2">
    <source>
        <dbReference type="UniProtKB" id="P05783"/>
    </source>
</evidence>
<evidence type="ECO:0000255" key="3"/>
<evidence type="ECO:0000255" key="4">
    <source>
        <dbReference type="PROSITE-ProRule" id="PRU01188"/>
    </source>
</evidence>
<evidence type="ECO:0000305" key="5"/>
<evidence type="ECO:0000312" key="6">
    <source>
        <dbReference type="EMBL" id="AAH61366.1"/>
    </source>
</evidence>
<evidence type="ECO:0000312" key="7">
    <source>
        <dbReference type="EMBL" id="CAJ82137.1"/>
    </source>
</evidence>
<proteinExistence type="evidence at transcript level"/>
<comment type="function">
    <text evidence="1">When phosphorylated, plays a role in filament reorganization.</text>
</comment>
<comment type="subunit">
    <text evidence="1">Heterotetramer of two type I and two type II keratins. Keratin-18 associates with keratin-8 (By similarity).</text>
</comment>
<comment type="PTM">
    <text evidence="1">Phosphorylated.</text>
</comment>
<comment type="PTM">
    <text evidence="1">Proteolytically cleaved by caspases during epithelial cell apoptosis.</text>
</comment>
<comment type="miscellaneous">
    <text evidence="5">There are two types of cytoskeletal and microfibrillar keratin: I (acidic; 40-55 kDa) and II (neutral to basic; 56-70 kDa).</text>
</comment>
<comment type="similarity">
    <text evidence="4">Belongs to the intermediate filament family.</text>
</comment>
<reference evidence="7" key="1">
    <citation type="submission" date="2006-10" db="EMBL/GenBank/DDBJ databases">
        <authorList>
            <consortium name="Sanger Xenopus tropicalis EST/cDNA project"/>
        </authorList>
    </citation>
    <scope>NUCLEOTIDE SEQUENCE [LARGE SCALE MRNA]</scope>
    <source>
        <tissue evidence="7">Egg</tissue>
    </source>
</reference>
<reference evidence="7" key="2">
    <citation type="submission" date="2003-11" db="EMBL/GenBank/DDBJ databases">
        <authorList>
            <consortium name="NIH - Xenopus Gene Collection (XGC) project"/>
        </authorList>
    </citation>
    <scope>NUCLEOTIDE SEQUENCE [LARGE SCALE MRNA]</scope>
    <source>
        <tissue evidence="6">Neurula</tissue>
    </source>
</reference>
<keyword id="KW-0175">Coiled coil</keyword>
<keyword id="KW-0403">Intermediate filament</keyword>
<keyword id="KW-0416">Keratin</keyword>
<keyword id="KW-0597">Phosphoprotein</keyword>
<keyword id="KW-1185">Reference proteome</keyword>